<protein>
    <recommendedName>
        <fullName evidence="1">Argininosuccinate synthase</fullName>
        <ecNumber evidence="1">6.3.4.5</ecNumber>
    </recommendedName>
    <alternativeName>
        <fullName evidence="1">Citrulline--aspartate ligase</fullName>
    </alternativeName>
</protein>
<evidence type="ECO:0000255" key="1">
    <source>
        <dbReference type="HAMAP-Rule" id="MF_00581"/>
    </source>
</evidence>
<keyword id="KW-0028">Amino-acid biosynthesis</keyword>
<keyword id="KW-0055">Arginine biosynthesis</keyword>
<keyword id="KW-0067">ATP-binding</keyword>
<keyword id="KW-0963">Cytoplasm</keyword>
<keyword id="KW-0436">Ligase</keyword>
<keyword id="KW-0547">Nucleotide-binding</keyword>
<gene>
    <name evidence="1" type="primary">argG</name>
    <name type="ordered locus">EcolC_0527</name>
</gene>
<sequence>MTTILKHLPVGQRIGIAFSGGLDTSAALLWMRQKGAVPYAYTANLGQPDEEDYDAIPRRAMEYGAENARLIDCRKQLVAEGIAAIQCGAFHNTTGGLTYFNTTPLGRAVTGTMLVAAMKEDGVNIWGDGSTYKGNDIERFYRYGLLTNAELQIYKPWLDTDFIDELGGRHEMSEFMIACGFDYKMSVEKAYSTDSNMLGATHEAKDLEYLHSSVKIVNPIMGVKFWDESVKIPAEEVTVRFEQGHPVALNGKTFSDDVEMMLEANRIGGRHGLGMSDQIENRIIEAKSRGIYEAPGMALLHIAYERLLTGIHNEDTIEQYHAHGRQLGRLLYQGRWFDSQALMLRDSLQRWVASQITGEVTLELRRGNDYSILNTVSENLTYKPERLTMEKGDSVFSPDDRIGQLTMRNLDITDTREKLFGYAKTGLLSSSAASGVPQVENLENKGQ</sequence>
<accession>B1IQV0</accession>
<dbReference type="EC" id="6.3.4.5" evidence="1"/>
<dbReference type="EMBL" id="CP000946">
    <property type="protein sequence ID" value="ACA76204.1"/>
    <property type="molecule type" value="Genomic_DNA"/>
</dbReference>
<dbReference type="RefSeq" id="WP_000207665.1">
    <property type="nucleotide sequence ID" value="NZ_MTFT01000027.1"/>
</dbReference>
<dbReference type="SMR" id="B1IQV0"/>
<dbReference type="KEGG" id="ecl:EcolC_0527"/>
<dbReference type="HOGENOM" id="CLU_032784_4_1_6"/>
<dbReference type="UniPathway" id="UPA00068">
    <property type="reaction ID" value="UER00113"/>
</dbReference>
<dbReference type="GO" id="GO:0005737">
    <property type="term" value="C:cytoplasm"/>
    <property type="evidence" value="ECO:0007669"/>
    <property type="project" value="UniProtKB-SubCell"/>
</dbReference>
<dbReference type="GO" id="GO:0004055">
    <property type="term" value="F:argininosuccinate synthase activity"/>
    <property type="evidence" value="ECO:0007669"/>
    <property type="project" value="UniProtKB-UniRule"/>
</dbReference>
<dbReference type="GO" id="GO:0005524">
    <property type="term" value="F:ATP binding"/>
    <property type="evidence" value="ECO:0007669"/>
    <property type="project" value="UniProtKB-UniRule"/>
</dbReference>
<dbReference type="GO" id="GO:0042803">
    <property type="term" value="F:protein homodimerization activity"/>
    <property type="evidence" value="ECO:0007669"/>
    <property type="project" value="InterPro"/>
</dbReference>
<dbReference type="GO" id="GO:0000053">
    <property type="term" value="P:argininosuccinate metabolic process"/>
    <property type="evidence" value="ECO:0007669"/>
    <property type="project" value="TreeGrafter"/>
</dbReference>
<dbReference type="GO" id="GO:0006526">
    <property type="term" value="P:L-arginine biosynthetic process"/>
    <property type="evidence" value="ECO:0007669"/>
    <property type="project" value="UniProtKB-UniRule"/>
</dbReference>
<dbReference type="GO" id="GO:0000050">
    <property type="term" value="P:urea cycle"/>
    <property type="evidence" value="ECO:0007669"/>
    <property type="project" value="TreeGrafter"/>
</dbReference>
<dbReference type="CDD" id="cd01999">
    <property type="entry name" value="ASS"/>
    <property type="match status" value="1"/>
</dbReference>
<dbReference type="FunFam" id="1.10.287.400:FF:000001">
    <property type="entry name" value="Argininosuccinate synthase"/>
    <property type="match status" value="1"/>
</dbReference>
<dbReference type="Gene3D" id="1.10.287.400">
    <property type="match status" value="1"/>
</dbReference>
<dbReference type="Gene3D" id="3.90.1260.10">
    <property type="entry name" value="Argininosuccinate synthetase, chain A, domain 2"/>
    <property type="match status" value="1"/>
</dbReference>
<dbReference type="Gene3D" id="3.40.50.620">
    <property type="entry name" value="HUPs"/>
    <property type="match status" value="1"/>
</dbReference>
<dbReference type="HAMAP" id="MF_00581">
    <property type="entry name" value="Arg_succ_synth_type2"/>
    <property type="match status" value="1"/>
</dbReference>
<dbReference type="InterPro" id="IPR023437">
    <property type="entry name" value="Arg_succ_synth_type2_subfam"/>
</dbReference>
<dbReference type="InterPro" id="IPR048268">
    <property type="entry name" value="Arginosuc_syn_C"/>
</dbReference>
<dbReference type="InterPro" id="IPR048267">
    <property type="entry name" value="Arginosuc_syn_N"/>
</dbReference>
<dbReference type="InterPro" id="IPR001518">
    <property type="entry name" value="Arginosuc_synth"/>
</dbReference>
<dbReference type="InterPro" id="IPR018223">
    <property type="entry name" value="Arginosuc_synth_CS"/>
</dbReference>
<dbReference type="InterPro" id="IPR023434">
    <property type="entry name" value="Arginosuc_synth_type_1_subfam"/>
</dbReference>
<dbReference type="InterPro" id="IPR024074">
    <property type="entry name" value="AS_cat/multimer_dom_body"/>
</dbReference>
<dbReference type="InterPro" id="IPR024073">
    <property type="entry name" value="AS_multimer_C_tail"/>
</dbReference>
<dbReference type="InterPro" id="IPR014729">
    <property type="entry name" value="Rossmann-like_a/b/a_fold"/>
</dbReference>
<dbReference type="NCBIfam" id="TIGR00032">
    <property type="entry name" value="argG"/>
    <property type="match status" value="1"/>
</dbReference>
<dbReference type="NCBIfam" id="NF003779">
    <property type="entry name" value="PRK05370.1"/>
    <property type="match status" value="1"/>
</dbReference>
<dbReference type="PANTHER" id="PTHR11587">
    <property type="entry name" value="ARGININOSUCCINATE SYNTHASE"/>
    <property type="match status" value="1"/>
</dbReference>
<dbReference type="PANTHER" id="PTHR11587:SF2">
    <property type="entry name" value="ARGININOSUCCINATE SYNTHASE"/>
    <property type="match status" value="1"/>
</dbReference>
<dbReference type="Pfam" id="PF20979">
    <property type="entry name" value="Arginosuc_syn_C"/>
    <property type="match status" value="1"/>
</dbReference>
<dbReference type="Pfam" id="PF00764">
    <property type="entry name" value="Arginosuc_synth"/>
    <property type="match status" value="1"/>
</dbReference>
<dbReference type="SUPFAM" id="SSF52402">
    <property type="entry name" value="Adenine nucleotide alpha hydrolases-like"/>
    <property type="match status" value="1"/>
</dbReference>
<dbReference type="SUPFAM" id="SSF69864">
    <property type="entry name" value="Argininosuccinate synthetase, C-terminal domain"/>
    <property type="match status" value="1"/>
</dbReference>
<dbReference type="PROSITE" id="PS00564">
    <property type="entry name" value="ARGININOSUCCIN_SYN_1"/>
    <property type="match status" value="1"/>
</dbReference>
<dbReference type="PROSITE" id="PS00565">
    <property type="entry name" value="ARGININOSUCCIN_SYN_2"/>
    <property type="match status" value="1"/>
</dbReference>
<feature type="chain" id="PRO_1000082400" description="Argininosuccinate synthase">
    <location>
        <begin position="1"/>
        <end position="447"/>
    </location>
</feature>
<feature type="binding site" evidence="1">
    <location>
        <begin position="17"/>
        <end position="25"/>
    </location>
    <ligand>
        <name>ATP</name>
        <dbReference type="ChEBI" id="CHEBI:30616"/>
    </ligand>
</feature>
<feature type="binding site" evidence="1">
    <location>
        <position position="43"/>
    </location>
    <ligand>
        <name>ATP</name>
        <dbReference type="ChEBI" id="CHEBI:30616"/>
    </ligand>
</feature>
<feature type="binding site" evidence="1">
    <location>
        <position position="99"/>
    </location>
    <ligand>
        <name>L-citrulline</name>
        <dbReference type="ChEBI" id="CHEBI:57743"/>
    </ligand>
</feature>
<feature type="binding site" evidence="1">
    <location>
        <position position="129"/>
    </location>
    <ligand>
        <name>ATP</name>
        <dbReference type="ChEBI" id="CHEBI:30616"/>
    </ligand>
</feature>
<feature type="binding site" evidence="1">
    <location>
        <position position="131"/>
    </location>
    <ligand>
        <name>ATP</name>
        <dbReference type="ChEBI" id="CHEBI:30616"/>
    </ligand>
</feature>
<feature type="binding site" evidence="1">
    <location>
        <position position="131"/>
    </location>
    <ligand>
        <name>L-aspartate</name>
        <dbReference type="ChEBI" id="CHEBI:29991"/>
    </ligand>
</feature>
<feature type="binding site" evidence="1">
    <location>
        <position position="135"/>
    </location>
    <ligand>
        <name>L-aspartate</name>
        <dbReference type="ChEBI" id="CHEBI:29991"/>
    </ligand>
</feature>
<feature type="binding site" evidence="1">
    <location>
        <position position="135"/>
    </location>
    <ligand>
        <name>L-citrulline</name>
        <dbReference type="ChEBI" id="CHEBI:57743"/>
    </ligand>
</feature>
<feature type="binding site" evidence="1">
    <location>
        <position position="136"/>
    </location>
    <ligand>
        <name>ATP</name>
        <dbReference type="ChEBI" id="CHEBI:30616"/>
    </ligand>
</feature>
<feature type="binding site" evidence="1">
    <location>
        <position position="136"/>
    </location>
    <ligand>
        <name>L-aspartate</name>
        <dbReference type="ChEBI" id="CHEBI:29991"/>
    </ligand>
</feature>
<feature type="binding site" evidence="1">
    <location>
        <position position="139"/>
    </location>
    <ligand>
        <name>L-citrulline</name>
        <dbReference type="ChEBI" id="CHEBI:57743"/>
    </ligand>
</feature>
<feature type="binding site" evidence="1">
    <location>
        <position position="192"/>
    </location>
    <ligand>
        <name>L-citrulline</name>
        <dbReference type="ChEBI" id="CHEBI:57743"/>
    </ligand>
</feature>
<feature type="binding site" evidence="1">
    <location>
        <position position="194"/>
    </location>
    <ligand>
        <name>ATP</name>
        <dbReference type="ChEBI" id="CHEBI:30616"/>
    </ligand>
</feature>
<feature type="binding site" evidence="1">
    <location>
        <position position="201"/>
    </location>
    <ligand>
        <name>L-citrulline</name>
        <dbReference type="ChEBI" id="CHEBI:57743"/>
    </ligand>
</feature>
<feature type="binding site" evidence="1">
    <location>
        <position position="203"/>
    </location>
    <ligand>
        <name>L-citrulline</name>
        <dbReference type="ChEBI" id="CHEBI:57743"/>
    </ligand>
</feature>
<feature type="binding site" evidence="1">
    <location>
        <position position="280"/>
    </location>
    <ligand>
        <name>L-citrulline</name>
        <dbReference type="ChEBI" id="CHEBI:57743"/>
    </ligand>
</feature>
<proteinExistence type="inferred from homology"/>
<organism>
    <name type="scientific">Escherichia coli (strain ATCC 8739 / DSM 1576 / NBRC 3972 / NCIMB 8545 / WDCM 00012 / Crooks)</name>
    <dbReference type="NCBI Taxonomy" id="481805"/>
    <lineage>
        <taxon>Bacteria</taxon>
        <taxon>Pseudomonadati</taxon>
        <taxon>Pseudomonadota</taxon>
        <taxon>Gammaproteobacteria</taxon>
        <taxon>Enterobacterales</taxon>
        <taxon>Enterobacteriaceae</taxon>
        <taxon>Escherichia</taxon>
    </lineage>
</organism>
<name>ASSY_ECOLC</name>
<comment type="catalytic activity">
    <reaction evidence="1">
        <text>L-citrulline + L-aspartate + ATP = 2-(N(omega)-L-arginino)succinate + AMP + diphosphate + H(+)</text>
        <dbReference type="Rhea" id="RHEA:10932"/>
        <dbReference type="ChEBI" id="CHEBI:15378"/>
        <dbReference type="ChEBI" id="CHEBI:29991"/>
        <dbReference type="ChEBI" id="CHEBI:30616"/>
        <dbReference type="ChEBI" id="CHEBI:33019"/>
        <dbReference type="ChEBI" id="CHEBI:57472"/>
        <dbReference type="ChEBI" id="CHEBI:57743"/>
        <dbReference type="ChEBI" id="CHEBI:456215"/>
        <dbReference type="EC" id="6.3.4.5"/>
    </reaction>
</comment>
<comment type="pathway">
    <text evidence="1">Amino-acid biosynthesis; L-arginine biosynthesis; L-arginine from L-ornithine and carbamoyl phosphate: step 2/3.</text>
</comment>
<comment type="subunit">
    <text evidence="1">Homotetramer.</text>
</comment>
<comment type="subcellular location">
    <subcellularLocation>
        <location evidence="1">Cytoplasm</location>
    </subcellularLocation>
</comment>
<comment type="similarity">
    <text evidence="1">Belongs to the argininosuccinate synthase family. Type 2 subfamily.</text>
</comment>
<reference key="1">
    <citation type="submission" date="2008-02" db="EMBL/GenBank/DDBJ databases">
        <title>Complete sequence of Escherichia coli C str. ATCC 8739.</title>
        <authorList>
            <person name="Copeland A."/>
            <person name="Lucas S."/>
            <person name="Lapidus A."/>
            <person name="Glavina del Rio T."/>
            <person name="Dalin E."/>
            <person name="Tice H."/>
            <person name="Bruce D."/>
            <person name="Goodwin L."/>
            <person name="Pitluck S."/>
            <person name="Kiss H."/>
            <person name="Brettin T."/>
            <person name="Detter J.C."/>
            <person name="Han C."/>
            <person name="Kuske C.R."/>
            <person name="Schmutz J."/>
            <person name="Larimer F."/>
            <person name="Land M."/>
            <person name="Hauser L."/>
            <person name="Kyrpides N."/>
            <person name="Mikhailova N."/>
            <person name="Ingram L."/>
            <person name="Richardson P."/>
        </authorList>
    </citation>
    <scope>NUCLEOTIDE SEQUENCE [LARGE SCALE GENOMIC DNA]</scope>
    <source>
        <strain>ATCC 8739 / DSM 1576 / NBRC 3972 / NCIMB 8545 / WDCM 00012 / Crooks</strain>
    </source>
</reference>